<accession>Q9XTY6</accession>
<accession>Q9BKB5</accession>
<accession>Q9XTY4</accession>
<keyword id="KW-0024">Alternative initiation</keyword>
<keyword id="KW-0025">Alternative splicing</keyword>
<keyword id="KW-0963">Cytoplasm</keyword>
<keyword id="KW-0206">Cytoskeleton</keyword>
<keyword id="KW-0217">Developmental protein</keyword>
<keyword id="KW-0472">Membrane</keyword>
<keyword id="KW-0597">Phosphoprotein</keyword>
<keyword id="KW-1185">Reference proteome</keyword>
<comment type="function">
    <text evidence="3">Involved in the tethering and targeting of pkc-3 to modulate the intracellular distribution of the kinase. The complex formed with pkc-3 complexes are likely to be involved in assembly, maintenance, and/or regulation of protein complexes that execute asymmetric and/or polarized cell functions.</text>
</comment>
<comment type="subunit">
    <text evidence="3 4">Interacts with pkc-3.</text>
</comment>
<comment type="interaction">
    <interactant intactId="EBI-495781">
        <id>Q9XTY6</id>
    </interactant>
    <interactant intactId="EBI-2414252">
        <id>Q9U2T9</id>
        <label>itsn-1</label>
    </interactant>
    <organismsDiffer>false</organismsDiffer>
    <experiments>3</experiments>
</comment>
<comment type="interaction">
    <interactant intactId="EBI-495781">
        <id>Q9XTY6</id>
    </interactant>
    <interactant intactId="EBI-319158">
        <id>Q19266</id>
        <label>pkc-3</label>
    </interactant>
    <organismsDiffer>false</organismsDiffer>
    <experiments>5</experiments>
</comment>
<comment type="interaction">
    <interactant intactId="EBI-495798">
        <id>Q9XTY6-1</id>
    </interactant>
    <interactant intactId="EBI-319158">
        <id>Q19266</id>
        <label>pkc-3</label>
    </interactant>
    <organismsDiffer>false</organismsDiffer>
    <experiments>5</experiments>
</comment>
<comment type="subcellular location">
    <subcellularLocation>
        <location>Cytoplasm</location>
        <location>Cell cortex</location>
    </subcellularLocation>
    <subcellularLocation>
        <location>Cytoplasm</location>
        <location>Cytoskeleton</location>
    </subcellularLocation>
    <subcellularLocation>
        <location>Membrane</location>
        <topology>Peripheral membrane protein</topology>
    </subcellularLocation>
    <text>Expressed at the inner surface of the plasma membrane at the cell periphery (which includes a region corresponding to plasma membrane and/or actin cortical cytoskeleton) in early embryos. Tightly associated with organelles and/or cytoskeletal structures with some diffuse expression in the cytoplasm. Differentially routed to lateral junctions between polarized cells.</text>
</comment>
<comment type="alternative products">
    <event type="alternative splicing"/>
    <event type="alternative initiation"/>
    <isoform>
        <id>Q9XTY6-1</id>
        <name evidence="3">a</name>
        <name evidence="5">cka1</name>
        <sequence type="displayed"/>
    </isoform>
    <isoform>
        <id>Q9XTY6-3</id>
        <name>b</name>
        <sequence type="described" ref="VSP_051598 VSP_051599"/>
    </isoform>
    <isoform>
        <id>Q9XTY6-4</id>
        <name>c</name>
        <sequence type="described" ref="VSP_018786"/>
    </isoform>
</comment>
<comment type="tissue specificity">
    <text evidence="3">Expressed in cells comprising the intestine, pharyngeal cells, the anal sphincter and depressor muscles.</text>
</comment>
<comment type="developmental stage">
    <text evidence="3">Expressed at each stage of development with predominance of isoform c in early larvae and isoform a in adults.</text>
</comment>
<comment type="domain">
    <text>The PID domain (phosphotyrosine interaction domain) of isoform a and isoform c is capable of binding residues 212-224 of pkc-3.</text>
</comment>
<comment type="miscellaneous">
    <molecule>Isoform b</molecule>
    <text evidence="6">Produced by alternative splicing.</text>
</comment>
<comment type="miscellaneous">
    <molecule>Isoform c</molecule>
    <text evidence="6">Produced by alternative initiation at Met-45 of isoform a.</text>
</comment>
<evidence type="ECO:0000255" key="1">
    <source>
        <dbReference type="PROSITE-ProRule" id="PRU00148"/>
    </source>
</evidence>
<evidence type="ECO:0000256" key="2">
    <source>
        <dbReference type="SAM" id="MobiDB-lite"/>
    </source>
</evidence>
<evidence type="ECO:0000269" key="3">
    <source>
    </source>
</evidence>
<evidence type="ECO:0000269" key="4">
    <source>
    </source>
</evidence>
<evidence type="ECO:0000303" key="5">
    <source>
    </source>
</evidence>
<evidence type="ECO:0000305" key="6"/>
<evidence type="ECO:0000312" key="7">
    <source>
        <dbReference type="EMBL" id="AAK28740.1"/>
    </source>
</evidence>
<evidence type="ECO:0000312" key="8">
    <source>
        <dbReference type="WormBase" id="T03D8.1c"/>
    </source>
</evidence>
<sequence length="593" mass="65510">MSASQGNVFTRGLSRISRRKKKTKSIQNSLVSEQQPSFDAAIVPMPIPNDKSSIFSKGMDRLRRSLRLPKKRRDRSHDRHLSPDVTGGSKTEQWQPDEGAVRTGTCCFNVKYLGSVEVYESRGMQVCEGALKSLKASRRKPVKAVLYVSGDGLRVVDQGNSRGLLVDQTIEKVSFCAPDRQTDKGFAYICRDGASRRWMCHGFLATKETGERLSHAVGCAFSICLEKKKRRDEETAQVNVQSAQESTSSTPPKDIFHPNWEDNTSEGTSTQNPSNSRSNLAYQSFRKHVSIEDRYLDPQSVIINEVPASNHMDEIRRISKPRPTGNPALFLRQGSLRAPPDMPSSSDQFKRNMSLRTVSNNPTERSPEKKSFGTQLYNEPIYEGDEDPLGLGITPPVVTKTSGSLSNNGLDGINLNWKSIPAPVHQMQQHNANGDFVAAWPQNTIEKPTVGPLDKLQKQFEDIKLISISSGENTPTTRSKADEWLDDVLRVSMSMSPTSPSSDPPSTSSYSVLPKSGPPPAHAPPPLPVRQAVSNGSPSIYQQQLQQANSTRNSPAGINWNSSPNPMKISQPPAKPVDPFDVQWSRLAVNNTH</sequence>
<protein>
    <recommendedName>
        <fullName>Numb-related protein 1</fullName>
    </recommendedName>
    <alternativeName>
        <fullName>CKA1</fullName>
    </alternativeName>
    <alternativeName>
        <fullName>Protein kinase C adapter 1</fullName>
    </alternativeName>
</protein>
<name>NUMB1_CAEEL</name>
<feature type="chain" id="PRO_0000021867" description="Numb-related protein 1">
    <location>
        <begin position="1"/>
        <end position="593"/>
    </location>
</feature>
<feature type="domain" description="PID" evidence="1">
    <location>
        <begin position="102"/>
        <end position="255"/>
    </location>
</feature>
<feature type="region of interest" description="Disordered" evidence="2">
    <location>
        <begin position="1"/>
        <end position="97"/>
    </location>
</feature>
<feature type="region of interest" description="Disordered" evidence="2">
    <location>
        <begin position="235"/>
        <end position="278"/>
    </location>
</feature>
<feature type="region of interest" description="Disordered" evidence="2">
    <location>
        <begin position="331"/>
        <end position="375"/>
    </location>
</feature>
<feature type="region of interest" description="Disordered" evidence="2">
    <location>
        <begin position="493"/>
        <end position="581"/>
    </location>
</feature>
<feature type="compositionally biased region" description="Polar residues" evidence="2">
    <location>
        <begin position="27"/>
        <end position="37"/>
    </location>
</feature>
<feature type="compositionally biased region" description="Basic residues" evidence="2">
    <location>
        <begin position="64"/>
        <end position="74"/>
    </location>
</feature>
<feature type="compositionally biased region" description="Polar residues" evidence="2">
    <location>
        <begin position="236"/>
        <end position="251"/>
    </location>
</feature>
<feature type="compositionally biased region" description="Polar residues" evidence="2">
    <location>
        <begin position="261"/>
        <end position="278"/>
    </location>
</feature>
<feature type="compositionally biased region" description="Polar residues" evidence="2">
    <location>
        <begin position="354"/>
        <end position="364"/>
    </location>
</feature>
<feature type="compositionally biased region" description="Low complexity" evidence="2">
    <location>
        <begin position="493"/>
        <end position="511"/>
    </location>
</feature>
<feature type="compositionally biased region" description="Pro residues" evidence="2">
    <location>
        <begin position="516"/>
        <end position="528"/>
    </location>
</feature>
<feature type="compositionally biased region" description="Polar residues" evidence="2">
    <location>
        <begin position="532"/>
        <end position="565"/>
    </location>
</feature>
<feature type="modified residue" description="Phosphoserine; by PKC" evidence="4">
    <location>
        <position position="17"/>
    </location>
</feature>
<feature type="modified residue" description="Phosphoserine; by PKC" evidence="4">
    <location>
        <position position="65"/>
    </location>
</feature>
<feature type="splice variant" id="VSP_051598" description="In isoform b." evidence="6">
    <location>
        <begin position="1"/>
        <end position="192"/>
    </location>
</feature>
<feature type="splice variant" id="VSP_018786" description="In isoform c." evidence="5">
    <location>
        <begin position="1"/>
        <end position="44"/>
    </location>
</feature>
<feature type="splice variant" id="VSP_051599" description="In isoform b." evidence="6">
    <original>GASRRWMCHGFLATKETGERLSHAVGCAFSICLEKKKRRDEETAQVNVQSAQESTSSTPPKDIFHPNWEDNTSEGTSTQNPSNSRSNLAYQSFRKHVSIEDRYLDPQSVIINEVPASNHMDEIRRISKPRPTGNPALFLRQGSLRAPPDMPSSSDQFKRNMSLRTVSNNPTERSPEKK</original>
    <variation>MVLIDTEYVRAVVHNVGHRARCGVASKVRALKLAHSQARLRSYSQACERASYIDGRCEYYPSLDVASSSRNSEMLNSGFFDGYSWNTPNIQSQSSSDVTAKTELRRLMTETSEDPIHKEDSETLRRLIMWQEFRDAGVDVNTTQPGYGYGIEAKVEPFPQKLQNYESIHLETRRSSCP</variation>
    <location>
        <begin position="193"/>
        <end position="370"/>
    </location>
</feature>
<feature type="mutagenesis site" description="Has no effect on efficiently routing num-1 to the cell periphery; when associated with A-65." evidence="4">
    <original>S</original>
    <variation>A</variation>
    <location>
        <position position="17"/>
    </location>
</feature>
<feature type="mutagenesis site" description="Promotes accumulation of num-1 in the cytoplasm; when associated with Q-65." evidence="4">
    <original>S</original>
    <variation>Q</variation>
    <location>
        <position position="17"/>
    </location>
</feature>
<feature type="mutagenesis site" description="Has no effect on efficiently routing num-1 to the cell periphery; when associated with A-17." evidence="4">
    <original>S</original>
    <variation>A</variation>
    <location>
        <position position="65"/>
    </location>
</feature>
<feature type="mutagenesis site" description="Promotes accumulation of num-1 in the cytoplasm; when associated with Q-17." evidence="4">
    <original>S</original>
    <variation>Q</variation>
    <location>
        <position position="65"/>
    </location>
</feature>
<feature type="mutagenesis site" description="Prevents binding to pkc-3." evidence="3">
    <original>F</original>
    <variation>L</variation>
    <location>
        <position position="175"/>
    </location>
</feature>
<feature type="mutagenesis site" description="Prevents binding to pkc-3." evidence="3">
    <original>F</original>
    <variation>L</variation>
    <location>
        <position position="221"/>
    </location>
</feature>
<reference evidence="6 7" key="1">
    <citation type="journal article" date="2001" name="J. Biol. Chem.">
        <title>A novel adapter protein employs a phosphotyrosine binding domain and exceptionally basic N-terminal domains to capture and localize an atypical protein kinase C: characterization of Caenorhabditis elegans C kinase adapter 1, a protein that avidly binds protein kinase C3.</title>
        <authorList>
            <person name="Zhang L."/>
            <person name="Wu S.-L."/>
            <person name="Rubin C.S."/>
        </authorList>
    </citation>
    <scope>NUCLEOTIDE SEQUENCE [MRNA] (ISOFORMS A AND C)</scope>
    <scope>FUNCTION</scope>
    <scope>INTERACTION WITH PKC-3</scope>
    <scope>SUBCELLULAR LOCATION</scope>
    <scope>TISSUE SPECIFICITY</scope>
    <scope>DEVELOPMENTAL STAGE</scope>
    <scope>MUTAGENESIS OF PHE-175 AND PHE-221</scope>
    <source>
        <strain evidence="3">Bristol N2</strain>
    </source>
</reference>
<reference key="2">
    <citation type="journal article" date="1998" name="Science">
        <title>Genome sequence of the nematode C. elegans: a platform for investigating biology.</title>
        <authorList>
            <consortium name="The C. elegans sequencing consortium"/>
        </authorList>
    </citation>
    <scope>NUCLEOTIDE SEQUENCE [LARGE SCALE GENOMIC DNA]</scope>
    <scope>ALTERNATIVE SPLICING</scope>
    <source>
        <strain>Bristol N2</strain>
    </source>
</reference>
<reference evidence="6" key="3">
    <citation type="journal article" date="2001" name="J. Biol. Chem.">
        <title>Structural properties and mechanisms that govern association of C kinase adapter 1 with protein kinase C3 and the cell periphery.</title>
        <authorList>
            <person name="Zhang L."/>
            <person name="Wu S.-L."/>
            <person name="Rubin C.S."/>
        </authorList>
    </citation>
    <scope>SUBCELLULAR LOCATION</scope>
    <scope>INTERACTION WITH PKC-3</scope>
    <scope>PHOSPHORYLATION AT SER-17 AND SER-65</scope>
    <scope>MUTAGENESIS OF SER-17 AND SER-65</scope>
</reference>
<proteinExistence type="evidence at protein level"/>
<dbReference type="EMBL" id="AF286205">
    <property type="protein sequence ID" value="AAK28740.1"/>
    <property type="molecule type" value="mRNA"/>
</dbReference>
<dbReference type="EMBL" id="AF286206">
    <property type="protein sequence ID" value="AAK28741.1"/>
    <property type="molecule type" value="mRNA"/>
</dbReference>
<dbReference type="EMBL" id="Z92838">
    <property type="protein sequence ID" value="CAB07407.1"/>
    <property type="molecule type" value="Genomic_DNA"/>
</dbReference>
<dbReference type="EMBL" id="Z92838">
    <property type="protein sequence ID" value="CAB07405.1"/>
    <property type="molecule type" value="Genomic_DNA"/>
</dbReference>
<dbReference type="EMBL" id="Z92838">
    <property type="protein sequence ID" value="CAD30449.1"/>
    <property type="molecule type" value="Genomic_DNA"/>
</dbReference>
<dbReference type="PIR" id="T24379">
    <property type="entry name" value="T24379"/>
</dbReference>
<dbReference type="PIR" id="T24381">
    <property type="entry name" value="T24381"/>
</dbReference>
<dbReference type="RefSeq" id="NP_001024097.1">
    <molecule id="Q9XTY6-3"/>
    <property type="nucleotide sequence ID" value="NM_001028926.5"/>
</dbReference>
<dbReference type="RefSeq" id="NP_001024098.1">
    <molecule id="Q9XTY6-4"/>
    <property type="nucleotide sequence ID" value="NM_001028927.3"/>
</dbReference>
<dbReference type="RefSeq" id="NP_508021.1">
    <molecule id="Q9XTY6-1"/>
    <property type="nucleotide sequence ID" value="NM_075620.6"/>
</dbReference>
<dbReference type="SMR" id="Q9XTY6"/>
<dbReference type="BioGRID" id="45323">
    <property type="interactions" value="5"/>
</dbReference>
<dbReference type="FunCoup" id="Q9XTY6">
    <property type="interactions" value="1862"/>
</dbReference>
<dbReference type="IntAct" id="Q9XTY6">
    <property type="interactions" value="3"/>
</dbReference>
<dbReference type="MINT" id="Q9XTY6"/>
<dbReference type="STRING" id="6239.T03D8.1d.1"/>
<dbReference type="iPTMnet" id="Q9XTY6"/>
<dbReference type="PaxDb" id="6239-T03D8.1d"/>
<dbReference type="PeptideAtlas" id="Q9XTY6"/>
<dbReference type="EnsemblMetazoa" id="T03D8.1a.1">
    <molecule id="Q9XTY6-1"/>
    <property type="protein sequence ID" value="T03D8.1a.1"/>
    <property type="gene ID" value="WBGene00003830"/>
</dbReference>
<dbReference type="EnsemblMetazoa" id="T03D8.1b.1">
    <molecule id="Q9XTY6-3"/>
    <property type="protein sequence ID" value="T03D8.1b.1"/>
    <property type="gene ID" value="WBGene00003830"/>
</dbReference>
<dbReference type="EnsemblMetazoa" id="T03D8.1c.1">
    <molecule id="Q9XTY6-4"/>
    <property type="protein sequence ID" value="T03D8.1c.1"/>
    <property type="gene ID" value="WBGene00003830"/>
</dbReference>
<dbReference type="GeneID" id="180367"/>
<dbReference type="KEGG" id="cel:CELE_T03D8.1"/>
<dbReference type="UCSC" id="C28D4.2">
    <molecule id="Q9XTY6-1"/>
    <property type="organism name" value="c. elegans"/>
</dbReference>
<dbReference type="AGR" id="WB:WBGene00003830"/>
<dbReference type="CTD" id="180367"/>
<dbReference type="WormBase" id="T03D8.1a">
    <molecule id="Q9XTY6-1"/>
    <property type="protein sequence ID" value="CE18918"/>
    <property type="gene ID" value="WBGene00003830"/>
    <property type="gene designation" value="num-1"/>
</dbReference>
<dbReference type="WormBase" id="T03D8.1b">
    <molecule id="Q9XTY6-3"/>
    <property type="protein sequence ID" value="CE18919"/>
    <property type="gene ID" value="WBGene00003830"/>
    <property type="gene designation" value="num-1"/>
</dbReference>
<dbReference type="WormBase" id="T03D8.1c">
    <molecule id="Q9XTY6-4"/>
    <property type="protein sequence ID" value="CE30563"/>
    <property type="gene ID" value="WBGene00003830"/>
    <property type="gene designation" value="num-1"/>
</dbReference>
<dbReference type="eggNOG" id="KOG3537">
    <property type="taxonomic scope" value="Eukaryota"/>
</dbReference>
<dbReference type="GeneTree" id="ENSGT00940000172612"/>
<dbReference type="InParanoid" id="Q9XTY6"/>
<dbReference type="OrthoDB" id="10070446at2759"/>
<dbReference type="PhylomeDB" id="Q9XTY6"/>
<dbReference type="PRO" id="PR:Q9XTY6"/>
<dbReference type="Proteomes" id="UP000001940">
    <property type="component" value="Chromosome V"/>
</dbReference>
<dbReference type="Bgee" id="WBGene00003830">
    <property type="expression patterns" value="Expressed in embryo and 4 other cell types or tissues"/>
</dbReference>
<dbReference type="ExpressionAtlas" id="Q9XTY6">
    <property type="expression patterns" value="baseline and differential"/>
</dbReference>
<dbReference type="GO" id="GO:0016323">
    <property type="term" value="C:basolateral plasma membrane"/>
    <property type="evidence" value="ECO:0000314"/>
    <property type="project" value="WormBase"/>
</dbReference>
<dbReference type="GO" id="GO:0005938">
    <property type="term" value="C:cell cortex"/>
    <property type="evidence" value="ECO:0007669"/>
    <property type="project" value="UniProtKB-SubCell"/>
</dbReference>
<dbReference type="GO" id="GO:0005737">
    <property type="term" value="C:cytoplasm"/>
    <property type="evidence" value="ECO:0000314"/>
    <property type="project" value="UniProtKB"/>
</dbReference>
<dbReference type="GO" id="GO:0005856">
    <property type="term" value="C:cytoskeleton"/>
    <property type="evidence" value="ECO:0007669"/>
    <property type="project" value="UniProtKB-SubCell"/>
</dbReference>
<dbReference type="GO" id="GO:0005886">
    <property type="term" value="C:plasma membrane"/>
    <property type="evidence" value="ECO:0000314"/>
    <property type="project" value="UniProtKB"/>
</dbReference>
<dbReference type="GO" id="GO:0051117">
    <property type="term" value="F:ATPase binding"/>
    <property type="evidence" value="ECO:0000353"/>
    <property type="project" value="WormBase"/>
</dbReference>
<dbReference type="GO" id="GO:0019904">
    <property type="term" value="F:protein domain specific binding"/>
    <property type="evidence" value="ECO:0000353"/>
    <property type="project" value="UniProtKB"/>
</dbReference>
<dbReference type="GO" id="GO:0005080">
    <property type="term" value="F:protein kinase C binding"/>
    <property type="evidence" value="ECO:0000353"/>
    <property type="project" value="UniProtKB"/>
</dbReference>
<dbReference type="GO" id="GO:0005068">
    <property type="term" value="F:transmembrane receptor protein tyrosine kinase adaptor activity"/>
    <property type="evidence" value="ECO:0000353"/>
    <property type="project" value="UniProtKB"/>
</dbReference>
<dbReference type="GO" id="GO:0032456">
    <property type="term" value="P:endocytic recycling"/>
    <property type="evidence" value="ECO:0000315"/>
    <property type="project" value="WormBase"/>
</dbReference>
<dbReference type="GO" id="GO:0015914">
    <property type="term" value="P:phospholipid transport"/>
    <property type="evidence" value="ECO:0000315"/>
    <property type="project" value="WormBase"/>
</dbReference>
<dbReference type="GO" id="GO:0006612">
    <property type="term" value="P:protein targeting to membrane"/>
    <property type="evidence" value="ECO:0000314"/>
    <property type="project" value="UniProtKB"/>
</dbReference>
<dbReference type="CDD" id="cd01268">
    <property type="entry name" value="PTB_Numb"/>
    <property type="match status" value="1"/>
</dbReference>
<dbReference type="FunFam" id="2.30.29.30:FF:000486">
    <property type="entry name" value="Numb-related protein 1"/>
    <property type="match status" value="1"/>
</dbReference>
<dbReference type="Gene3D" id="2.30.29.30">
    <property type="entry name" value="Pleckstrin-homology domain (PH domain)/Phosphotyrosine-binding domain (PTB)"/>
    <property type="match status" value="1"/>
</dbReference>
<dbReference type="InterPro" id="IPR016698">
    <property type="entry name" value="Numb/numb-like"/>
</dbReference>
<dbReference type="InterPro" id="IPR011993">
    <property type="entry name" value="PH-like_dom_sf"/>
</dbReference>
<dbReference type="InterPro" id="IPR006020">
    <property type="entry name" value="PTB/PI_dom"/>
</dbReference>
<dbReference type="PANTHER" id="PTHR47368">
    <property type="entry name" value="NUMB"/>
    <property type="match status" value="1"/>
</dbReference>
<dbReference type="PANTHER" id="PTHR47368:SF2">
    <property type="entry name" value="PID DOMAIN-CONTAINING PROTEIN"/>
    <property type="match status" value="1"/>
</dbReference>
<dbReference type="Pfam" id="PF00640">
    <property type="entry name" value="PID"/>
    <property type="match status" value="1"/>
</dbReference>
<dbReference type="PIRSF" id="PIRSF017607">
    <property type="entry name" value="Numb/numb-like"/>
    <property type="match status" value="1"/>
</dbReference>
<dbReference type="SMART" id="SM00462">
    <property type="entry name" value="PTB"/>
    <property type="match status" value="1"/>
</dbReference>
<dbReference type="SUPFAM" id="SSF50729">
    <property type="entry name" value="PH domain-like"/>
    <property type="match status" value="1"/>
</dbReference>
<dbReference type="PROSITE" id="PS01179">
    <property type="entry name" value="PID"/>
    <property type="match status" value="1"/>
</dbReference>
<gene>
    <name evidence="8" type="primary">num-1</name>
    <name type="synonym">cka-1</name>
    <name type="ORF">T03D8.1</name>
</gene>
<organism>
    <name type="scientific">Caenorhabditis elegans</name>
    <dbReference type="NCBI Taxonomy" id="6239"/>
    <lineage>
        <taxon>Eukaryota</taxon>
        <taxon>Metazoa</taxon>
        <taxon>Ecdysozoa</taxon>
        <taxon>Nematoda</taxon>
        <taxon>Chromadorea</taxon>
        <taxon>Rhabditida</taxon>
        <taxon>Rhabditina</taxon>
        <taxon>Rhabditomorpha</taxon>
        <taxon>Rhabditoidea</taxon>
        <taxon>Rhabditidae</taxon>
        <taxon>Peloderinae</taxon>
        <taxon>Caenorhabditis</taxon>
    </lineage>
</organism>